<reference key="1">
    <citation type="journal article" date="2000" name="DNA Res.">
        <title>Complete genome structure of the nitrogen-fixing symbiotic bacterium Mesorhizobium loti.</title>
        <authorList>
            <person name="Kaneko T."/>
            <person name="Nakamura Y."/>
            <person name="Sato S."/>
            <person name="Asamizu E."/>
            <person name="Kato T."/>
            <person name="Sasamoto S."/>
            <person name="Watanabe A."/>
            <person name="Idesawa K."/>
            <person name="Ishikawa A."/>
            <person name="Kawashima K."/>
            <person name="Kimura T."/>
            <person name="Kishida Y."/>
            <person name="Kiyokawa C."/>
            <person name="Kohara M."/>
            <person name="Matsumoto M."/>
            <person name="Matsuno A."/>
            <person name="Mochizuki Y."/>
            <person name="Nakayama S."/>
            <person name="Nakazaki N."/>
            <person name="Shimpo S."/>
            <person name="Sugimoto M."/>
            <person name="Takeuchi C."/>
            <person name="Yamada M."/>
            <person name="Tabata S."/>
        </authorList>
    </citation>
    <scope>NUCLEOTIDE SEQUENCE [LARGE SCALE GENOMIC DNA]</scope>
    <source>
        <strain>LMG 29417 / CECT 9101 / MAFF 303099</strain>
    </source>
</reference>
<gene>
    <name evidence="1" type="primary">glyS</name>
    <name type="ordered locus">mlr7435</name>
</gene>
<sequence length="718" mass="78611">MPDLLLELRSEEIPARMQRKAAGDLKKMLTDGLVEAGLTYEAAREYWTPRRLTLDIRGLTARSKDIREEIKGPSTTAPEQAVQGFLRKAGLSSVADAHVHSDPKKGDFYVAHISKPGRAAEEIIAQLVPGIIRNFPWPKSMRWGPASAKPGSLRWVRPLQSVLCTFGPETEEPVVVDFEIDGIRSGNITYGHRFLAPGEITVRRFDDYVSKLEAAKVVLDADRRKEIILADARNLAFANGLDLVEDEGLLEEVSGLVEWPVVLMGEFEEAFLAIPAEVIRLTIRANQKCFVTRPQGEGEALSNRFILTSNIEARDGGKEIAHGNGKVVRARLSDALYFWTTDQGDLPDLGQLEASAEKFGLDLNKPLDQRMARLDHLNVTFHAKLGTQGERVERIRRLAEELAPTVGADPVLAARAAVLAKADLQTEVVGEFPELQGAMGRKYALLQGEHPSVAAAIEEHYKPQGPSDYVPSDPVSVAVALADKLDTLVGFWAIDEKPTGSKDPYALRRAALGVVRILVEDRIQLRLSSIFASAGACYAGSGADQTRDLLAFFHDRLKVYLRDQGARHDLIDAVITPQSDDLLQIVRRVEALGSFLDTEDGKNLLAGTKRAANILAAEEKKKTAVAKTVEPALFKENAEKSLFAAVNQAEKQAGEAIQNEDFSAAMLALSALREPVDSFFEGVLVNDEDLEVRANRLALLTRIRAATGQVADFSKIAG</sequence>
<name>SYGB_RHILO</name>
<evidence type="ECO:0000255" key="1">
    <source>
        <dbReference type="HAMAP-Rule" id="MF_00255"/>
    </source>
</evidence>
<protein>
    <recommendedName>
        <fullName evidence="1">Glycine--tRNA ligase beta subunit</fullName>
        <ecNumber evidence="1">6.1.1.14</ecNumber>
    </recommendedName>
    <alternativeName>
        <fullName evidence="1">Glycyl-tRNA synthetase beta subunit</fullName>
        <shortName evidence="1">GlyRS</shortName>
    </alternativeName>
</protein>
<comment type="catalytic activity">
    <reaction evidence="1">
        <text>tRNA(Gly) + glycine + ATP = glycyl-tRNA(Gly) + AMP + diphosphate</text>
        <dbReference type="Rhea" id="RHEA:16013"/>
        <dbReference type="Rhea" id="RHEA-COMP:9664"/>
        <dbReference type="Rhea" id="RHEA-COMP:9683"/>
        <dbReference type="ChEBI" id="CHEBI:30616"/>
        <dbReference type="ChEBI" id="CHEBI:33019"/>
        <dbReference type="ChEBI" id="CHEBI:57305"/>
        <dbReference type="ChEBI" id="CHEBI:78442"/>
        <dbReference type="ChEBI" id="CHEBI:78522"/>
        <dbReference type="ChEBI" id="CHEBI:456215"/>
        <dbReference type="EC" id="6.1.1.14"/>
    </reaction>
</comment>
<comment type="subunit">
    <text evidence="1">Tetramer of two alpha and two beta subunits.</text>
</comment>
<comment type="subcellular location">
    <subcellularLocation>
        <location evidence="1">Cytoplasm</location>
    </subcellularLocation>
</comment>
<comment type="similarity">
    <text evidence="1">Belongs to the class-II aminoacyl-tRNA synthetase family.</text>
</comment>
<accession>Q986B5</accession>
<feature type="chain" id="PRO_0000072922" description="Glycine--tRNA ligase beta subunit">
    <location>
        <begin position="1"/>
        <end position="718"/>
    </location>
</feature>
<proteinExistence type="inferred from homology"/>
<keyword id="KW-0030">Aminoacyl-tRNA synthetase</keyword>
<keyword id="KW-0067">ATP-binding</keyword>
<keyword id="KW-0963">Cytoplasm</keyword>
<keyword id="KW-0436">Ligase</keyword>
<keyword id="KW-0547">Nucleotide-binding</keyword>
<keyword id="KW-0648">Protein biosynthesis</keyword>
<organism>
    <name type="scientific">Mesorhizobium japonicum (strain LMG 29417 / CECT 9101 / MAFF 303099)</name>
    <name type="common">Mesorhizobium loti (strain MAFF 303099)</name>
    <dbReference type="NCBI Taxonomy" id="266835"/>
    <lineage>
        <taxon>Bacteria</taxon>
        <taxon>Pseudomonadati</taxon>
        <taxon>Pseudomonadota</taxon>
        <taxon>Alphaproteobacteria</taxon>
        <taxon>Hyphomicrobiales</taxon>
        <taxon>Phyllobacteriaceae</taxon>
        <taxon>Mesorhizobium</taxon>
    </lineage>
</organism>
<dbReference type="EC" id="6.1.1.14" evidence="1"/>
<dbReference type="EMBL" id="BA000012">
    <property type="protein sequence ID" value="BAB53538.1"/>
    <property type="molecule type" value="Genomic_DNA"/>
</dbReference>
<dbReference type="RefSeq" id="WP_010914845.1">
    <property type="nucleotide sequence ID" value="NC_002678.2"/>
</dbReference>
<dbReference type="SMR" id="Q986B5"/>
<dbReference type="KEGG" id="mlo:mlr7435"/>
<dbReference type="PATRIC" id="fig|266835.9.peg.5937"/>
<dbReference type="eggNOG" id="COG0751">
    <property type="taxonomic scope" value="Bacteria"/>
</dbReference>
<dbReference type="HOGENOM" id="CLU_007220_2_1_5"/>
<dbReference type="Proteomes" id="UP000000552">
    <property type="component" value="Chromosome"/>
</dbReference>
<dbReference type="GO" id="GO:0005829">
    <property type="term" value="C:cytosol"/>
    <property type="evidence" value="ECO:0007669"/>
    <property type="project" value="TreeGrafter"/>
</dbReference>
<dbReference type="GO" id="GO:0004814">
    <property type="term" value="F:arginine-tRNA ligase activity"/>
    <property type="evidence" value="ECO:0007669"/>
    <property type="project" value="InterPro"/>
</dbReference>
<dbReference type="GO" id="GO:0005524">
    <property type="term" value="F:ATP binding"/>
    <property type="evidence" value="ECO:0007669"/>
    <property type="project" value="UniProtKB-UniRule"/>
</dbReference>
<dbReference type="GO" id="GO:0004820">
    <property type="term" value="F:glycine-tRNA ligase activity"/>
    <property type="evidence" value="ECO:0007669"/>
    <property type="project" value="UniProtKB-UniRule"/>
</dbReference>
<dbReference type="GO" id="GO:0006420">
    <property type="term" value="P:arginyl-tRNA aminoacylation"/>
    <property type="evidence" value="ECO:0007669"/>
    <property type="project" value="InterPro"/>
</dbReference>
<dbReference type="GO" id="GO:0006426">
    <property type="term" value="P:glycyl-tRNA aminoacylation"/>
    <property type="evidence" value="ECO:0007669"/>
    <property type="project" value="UniProtKB-UniRule"/>
</dbReference>
<dbReference type="HAMAP" id="MF_00255">
    <property type="entry name" value="Gly_tRNA_synth_beta"/>
    <property type="match status" value="1"/>
</dbReference>
<dbReference type="InterPro" id="IPR008909">
    <property type="entry name" value="DALR_anticod-bd"/>
</dbReference>
<dbReference type="InterPro" id="IPR015944">
    <property type="entry name" value="Gly-tRNA-synth_bsu"/>
</dbReference>
<dbReference type="InterPro" id="IPR006194">
    <property type="entry name" value="Gly-tRNA-synth_heterodimer"/>
</dbReference>
<dbReference type="NCBIfam" id="TIGR00211">
    <property type="entry name" value="glyS"/>
    <property type="match status" value="1"/>
</dbReference>
<dbReference type="PANTHER" id="PTHR30075:SF2">
    <property type="entry name" value="GLYCINE--TRNA LIGASE, CHLOROPLASTIC_MITOCHONDRIAL 2"/>
    <property type="match status" value="1"/>
</dbReference>
<dbReference type="PANTHER" id="PTHR30075">
    <property type="entry name" value="GLYCYL-TRNA SYNTHETASE"/>
    <property type="match status" value="1"/>
</dbReference>
<dbReference type="Pfam" id="PF05746">
    <property type="entry name" value="DALR_1"/>
    <property type="match status" value="1"/>
</dbReference>
<dbReference type="Pfam" id="PF02092">
    <property type="entry name" value="tRNA_synt_2f"/>
    <property type="match status" value="1"/>
</dbReference>
<dbReference type="PRINTS" id="PR01045">
    <property type="entry name" value="TRNASYNTHGB"/>
</dbReference>
<dbReference type="SUPFAM" id="SSF109604">
    <property type="entry name" value="HD-domain/PDEase-like"/>
    <property type="match status" value="1"/>
</dbReference>
<dbReference type="PROSITE" id="PS50861">
    <property type="entry name" value="AA_TRNA_LIGASE_II_GLYAB"/>
    <property type="match status" value="1"/>
</dbReference>